<dbReference type="EC" id="4.2.1.33" evidence="1"/>
<dbReference type="EMBL" id="AP006878">
    <property type="protein sequence ID" value="BAD84471.1"/>
    <property type="molecule type" value="Genomic_DNA"/>
</dbReference>
<dbReference type="RefSeq" id="WP_011249237.1">
    <property type="nucleotide sequence ID" value="NC_006624.1"/>
</dbReference>
<dbReference type="SMR" id="Q5JFV6"/>
<dbReference type="FunCoup" id="Q5JFV6">
    <property type="interactions" value="209"/>
</dbReference>
<dbReference type="STRING" id="69014.TK0282"/>
<dbReference type="EnsemblBacteria" id="BAD84471">
    <property type="protein sequence ID" value="BAD84471"/>
    <property type="gene ID" value="TK0282"/>
</dbReference>
<dbReference type="GeneID" id="78446784"/>
<dbReference type="KEGG" id="tko:TK0282"/>
<dbReference type="PATRIC" id="fig|69014.16.peg.281"/>
<dbReference type="eggNOG" id="arCOG01698">
    <property type="taxonomic scope" value="Archaea"/>
</dbReference>
<dbReference type="HOGENOM" id="CLU_006714_3_4_2"/>
<dbReference type="InParanoid" id="Q5JFV6"/>
<dbReference type="OrthoDB" id="255at2157"/>
<dbReference type="PhylomeDB" id="Q5JFV6"/>
<dbReference type="UniPathway" id="UPA00048">
    <property type="reaction ID" value="UER00071"/>
</dbReference>
<dbReference type="Proteomes" id="UP000000536">
    <property type="component" value="Chromosome"/>
</dbReference>
<dbReference type="GO" id="GO:0003861">
    <property type="term" value="F:3-isopropylmalate dehydratase activity"/>
    <property type="evidence" value="ECO:0007669"/>
    <property type="project" value="UniProtKB-UniRule"/>
</dbReference>
<dbReference type="GO" id="GO:0051539">
    <property type="term" value="F:4 iron, 4 sulfur cluster binding"/>
    <property type="evidence" value="ECO:0007669"/>
    <property type="project" value="UniProtKB-KW"/>
</dbReference>
<dbReference type="GO" id="GO:0046872">
    <property type="term" value="F:metal ion binding"/>
    <property type="evidence" value="ECO:0007669"/>
    <property type="project" value="UniProtKB-KW"/>
</dbReference>
<dbReference type="GO" id="GO:0009098">
    <property type="term" value="P:L-leucine biosynthetic process"/>
    <property type="evidence" value="ECO:0007669"/>
    <property type="project" value="UniProtKB-UniRule"/>
</dbReference>
<dbReference type="Gene3D" id="3.30.499.10">
    <property type="entry name" value="Aconitase, domain 3"/>
    <property type="match status" value="2"/>
</dbReference>
<dbReference type="HAMAP" id="MF_01027">
    <property type="entry name" value="LeuC_type2"/>
    <property type="match status" value="1"/>
</dbReference>
<dbReference type="InterPro" id="IPR015931">
    <property type="entry name" value="Acnase/IPM_dHydase_lsu_aba_1/3"/>
</dbReference>
<dbReference type="InterPro" id="IPR001030">
    <property type="entry name" value="Acoase/IPM_deHydtase_lsu_aba"/>
</dbReference>
<dbReference type="InterPro" id="IPR018136">
    <property type="entry name" value="Aconitase_4Fe-4S_BS"/>
</dbReference>
<dbReference type="InterPro" id="IPR036008">
    <property type="entry name" value="Aconitase_4Fe-4S_dom"/>
</dbReference>
<dbReference type="InterPro" id="IPR011826">
    <property type="entry name" value="HAcnase/IPMdehydase_lsu_prok"/>
</dbReference>
<dbReference type="InterPro" id="IPR050067">
    <property type="entry name" value="IPM_dehydratase_rel_enz"/>
</dbReference>
<dbReference type="NCBIfam" id="TIGR02086">
    <property type="entry name" value="IPMI_arch"/>
    <property type="match status" value="1"/>
</dbReference>
<dbReference type="NCBIfam" id="NF001614">
    <property type="entry name" value="PRK00402.1"/>
    <property type="match status" value="1"/>
</dbReference>
<dbReference type="PANTHER" id="PTHR43822:SF2">
    <property type="entry name" value="HOMOACONITASE, MITOCHONDRIAL"/>
    <property type="match status" value="1"/>
</dbReference>
<dbReference type="PANTHER" id="PTHR43822">
    <property type="entry name" value="HOMOACONITASE, MITOCHONDRIAL-RELATED"/>
    <property type="match status" value="1"/>
</dbReference>
<dbReference type="Pfam" id="PF00330">
    <property type="entry name" value="Aconitase"/>
    <property type="match status" value="2"/>
</dbReference>
<dbReference type="PRINTS" id="PR00415">
    <property type="entry name" value="ACONITASE"/>
</dbReference>
<dbReference type="SUPFAM" id="SSF53732">
    <property type="entry name" value="Aconitase iron-sulfur domain"/>
    <property type="match status" value="1"/>
</dbReference>
<dbReference type="PROSITE" id="PS00450">
    <property type="entry name" value="ACONITASE_1"/>
    <property type="match status" value="1"/>
</dbReference>
<dbReference type="PROSITE" id="PS01244">
    <property type="entry name" value="ACONITASE_2"/>
    <property type="match status" value="1"/>
</dbReference>
<proteinExistence type="inferred from homology"/>
<sequence>MTLVEELLGAKTGEVVVREVDLVYAHDGTMPLIIEAFRRNFTRVVPRTYVFFDHVFPAPTVKIANLQKEILEFAGEQGIPVIQGQGISHQLAVEMGLADNARIVVGADSHTPTLGALGVFAVGIGATDTAVVMGLGKTWFRVPESVSVVFEGRPGKNVMAADAMIHIITALRDFEMNYKAIEFFNVPFSFDERLTLTNFSVEANAKTGIIGEEYSGDGYVLELGIDLSSLPPMVAKPHHPSNGVPVEEVEGTKIDQVFIGSCTNGRFEQIERAAEILAGEEVAVRTIIGPASANVYRRMIETGIAKVLIDAGAVILPPGCGPCLGRHMGVAGDGDVILSTTNRNFRGRMGSPNSEIYLASPVTAALSALYGEITTPEGGA</sequence>
<name>LEUC_THEKO</name>
<organism>
    <name type="scientific">Thermococcus kodakarensis (strain ATCC BAA-918 / JCM 12380 / KOD1)</name>
    <name type="common">Pyrococcus kodakaraensis (strain KOD1)</name>
    <dbReference type="NCBI Taxonomy" id="69014"/>
    <lineage>
        <taxon>Archaea</taxon>
        <taxon>Methanobacteriati</taxon>
        <taxon>Methanobacteriota</taxon>
        <taxon>Thermococci</taxon>
        <taxon>Thermococcales</taxon>
        <taxon>Thermococcaceae</taxon>
        <taxon>Thermococcus</taxon>
    </lineage>
</organism>
<keyword id="KW-0004">4Fe-4S</keyword>
<keyword id="KW-0028">Amino-acid biosynthesis</keyword>
<keyword id="KW-0100">Branched-chain amino acid biosynthesis</keyword>
<keyword id="KW-0408">Iron</keyword>
<keyword id="KW-0411">Iron-sulfur</keyword>
<keyword id="KW-0432">Leucine biosynthesis</keyword>
<keyword id="KW-0456">Lyase</keyword>
<keyword id="KW-0479">Metal-binding</keyword>
<keyword id="KW-1185">Reference proteome</keyword>
<evidence type="ECO:0000255" key="1">
    <source>
        <dbReference type="HAMAP-Rule" id="MF_01027"/>
    </source>
</evidence>
<protein>
    <recommendedName>
        <fullName evidence="1">3-isopropylmalate dehydratase large subunit</fullName>
        <ecNumber evidence="1">4.2.1.33</ecNumber>
    </recommendedName>
    <alternativeName>
        <fullName evidence="1">Alpha-IPM isomerase</fullName>
        <shortName evidence="1">IPMI</shortName>
    </alternativeName>
    <alternativeName>
        <fullName evidence="1">Isopropylmalate isomerase</fullName>
    </alternativeName>
</protein>
<gene>
    <name evidence="1" type="primary">leuC</name>
    <name type="ordered locus">TK0282</name>
</gene>
<feature type="chain" id="PRO_0000076883" description="3-isopropylmalate dehydratase large subunit">
    <location>
        <begin position="1"/>
        <end position="380"/>
    </location>
</feature>
<feature type="binding site" evidence="1">
    <location>
        <position position="262"/>
    </location>
    <ligand>
        <name>[4Fe-4S] cluster</name>
        <dbReference type="ChEBI" id="CHEBI:49883"/>
    </ligand>
</feature>
<feature type="binding site" evidence="1">
    <location>
        <position position="320"/>
    </location>
    <ligand>
        <name>[4Fe-4S] cluster</name>
        <dbReference type="ChEBI" id="CHEBI:49883"/>
    </ligand>
</feature>
<feature type="binding site" evidence="1">
    <location>
        <position position="323"/>
    </location>
    <ligand>
        <name>[4Fe-4S] cluster</name>
        <dbReference type="ChEBI" id="CHEBI:49883"/>
    </ligand>
</feature>
<comment type="function">
    <text evidence="1">Catalyzes the isomerization between 2-isopropylmalate and 3-isopropylmalate, via the formation of 2-isopropylmaleate.</text>
</comment>
<comment type="catalytic activity">
    <reaction evidence="1">
        <text>(2R,3S)-3-isopropylmalate = (2S)-2-isopropylmalate</text>
        <dbReference type="Rhea" id="RHEA:32287"/>
        <dbReference type="ChEBI" id="CHEBI:1178"/>
        <dbReference type="ChEBI" id="CHEBI:35121"/>
        <dbReference type="EC" id="4.2.1.33"/>
    </reaction>
</comment>
<comment type="cofactor">
    <cofactor evidence="1">
        <name>[4Fe-4S] cluster</name>
        <dbReference type="ChEBI" id="CHEBI:49883"/>
    </cofactor>
    <text evidence="1">Binds 1 [4Fe-4S] cluster per subunit.</text>
</comment>
<comment type="pathway">
    <text evidence="1">Amino-acid biosynthesis; L-leucine biosynthesis; L-leucine from 3-methyl-2-oxobutanoate: step 2/4.</text>
</comment>
<comment type="subunit">
    <text evidence="1">Heterodimer of LeuC and LeuD.</text>
</comment>
<comment type="similarity">
    <text evidence="1">Belongs to the aconitase/IPM isomerase family. LeuC type 2 subfamily.</text>
</comment>
<accession>Q5JFV6</accession>
<reference key="1">
    <citation type="journal article" date="2005" name="Genome Res.">
        <title>Complete genome sequence of the hyperthermophilic archaeon Thermococcus kodakaraensis KOD1 and comparison with Pyrococcus genomes.</title>
        <authorList>
            <person name="Fukui T."/>
            <person name="Atomi H."/>
            <person name="Kanai T."/>
            <person name="Matsumi R."/>
            <person name="Fujiwara S."/>
            <person name="Imanaka T."/>
        </authorList>
    </citation>
    <scope>NUCLEOTIDE SEQUENCE [LARGE SCALE GENOMIC DNA]</scope>
    <source>
        <strain>ATCC BAA-918 / JCM 12380 / KOD1</strain>
    </source>
</reference>